<evidence type="ECO:0000250" key="1"/>
<evidence type="ECO:0000255" key="2">
    <source>
        <dbReference type="HAMAP-Rule" id="MF_01057"/>
    </source>
</evidence>
<evidence type="ECO:0000256" key="3">
    <source>
        <dbReference type="SAM" id="MobiDB-lite"/>
    </source>
</evidence>
<feature type="chain" id="PRO_1000136368" description="tRNA (guanine-N(7)-)-methyltransferase">
    <location>
        <begin position="1"/>
        <end position="244"/>
    </location>
</feature>
<feature type="region of interest" description="Disordered" evidence="3">
    <location>
        <begin position="1"/>
        <end position="20"/>
    </location>
</feature>
<feature type="region of interest" description="Interaction with RNA" evidence="2">
    <location>
        <begin position="156"/>
        <end position="161"/>
    </location>
</feature>
<feature type="active site" evidence="1">
    <location>
        <position position="150"/>
    </location>
</feature>
<feature type="binding site" evidence="2">
    <location>
        <position position="75"/>
    </location>
    <ligand>
        <name>S-adenosyl-L-methionine</name>
        <dbReference type="ChEBI" id="CHEBI:59789"/>
    </ligand>
</feature>
<feature type="binding site" evidence="2">
    <location>
        <position position="100"/>
    </location>
    <ligand>
        <name>S-adenosyl-L-methionine</name>
        <dbReference type="ChEBI" id="CHEBI:59789"/>
    </ligand>
</feature>
<feature type="binding site" evidence="2">
    <location>
        <position position="127"/>
    </location>
    <ligand>
        <name>S-adenosyl-L-methionine</name>
        <dbReference type="ChEBI" id="CHEBI:59789"/>
    </ligand>
</feature>
<feature type="binding site" evidence="2">
    <location>
        <position position="150"/>
    </location>
    <ligand>
        <name>S-adenosyl-L-methionine</name>
        <dbReference type="ChEBI" id="CHEBI:59789"/>
    </ligand>
</feature>
<feature type="binding site" evidence="2">
    <location>
        <position position="154"/>
    </location>
    <ligand>
        <name>substrate</name>
    </ligand>
</feature>
<feature type="binding site" evidence="2">
    <location>
        <position position="186"/>
    </location>
    <ligand>
        <name>substrate</name>
    </ligand>
</feature>
<feature type="binding site" evidence="2">
    <location>
        <begin position="223"/>
        <end position="226"/>
    </location>
    <ligand>
        <name>substrate</name>
    </ligand>
</feature>
<name>TRMB_STRMK</name>
<comment type="function">
    <text evidence="2">Catalyzes the formation of N(7)-methylguanine at position 46 (m7G46) in tRNA.</text>
</comment>
<comment type="catalytic activity">
    <reaction evidence="2">
        <text>guanosine(46) in tRNA + S-adenosyl-L-methionine = N(7)-methylguanosine(46) in tRNA + S-adenosyl-L-homocysteine</text>
        <dbReference type="Rhea" id="RHEA:42708"/>
        <dbReference type="Rhea" id="RHEA-COMP:10188"/>
        <dbReference type="Rhea" id="RHEA-COMP:10189"/>
        <dbReference type="ChEBI" id="CHEBI:57856"/>
        <dbReference type="ChEBI" id="CHEBI:59789"/>
        <dbReference type="ChEBI" id="CHEBI:74269"/>
        <dbReference type="ChEBI" id="CHEBI:74480"/>
        <dbReference type="EC" id="2.1.1.33"/>
    </reaction>
</comment>
<comment type="pathway">
    <text evidence="2">tRNA modification; N(7)-methylguanine-tRNA biosynthesis.</text>
</comment>
<comment type="similarity">
    <text evidence="2">Belongs to the class I-like SAM-binding methyltransferase superfamily. TrmB family.</text>
</comment>
<keyword id="KW-0489">Methyltransferase</keyword>
<keyword id="KW-1185">Reference proteome</keyword>
<keyword id="KW-0949">S-adenosyl-L-methionine</keyword>
<keyword id="KW-0808">Transferase</keyword>
<keyword id="KW-0819">tRNA processing</keyword>
<sequence length="244" mass="27771">MTNPFDSAGSKAPPKPFTVSEGRREVRSFVLRQGRFTPAQQRAFDERWPRFGLDYTGQPRDLDATFGRPAHKVLEIGFGNGAALRFAAQHDPSRDYIGIEVHAPGVGRLLNALADDNADHVRLYHHDAVEVLQNEIADGALDEVRIYFPDPWHKKRHNKRRLLQPAFAELLVRKLRPGGRLHCATDWEDYAEQMWDVLDATAGLVNRAGPRGSVPRPDWRPQTHFETRGQKLGHGVWDLLYDRT</sequence>
<accession>B2FSD1</accession>
<protein>
    <recommendedName>
        <fullName evidence="2">tRNA (guanine-N(7)-)-methyltransferase</fullName>
        <ecNumber evidence="2">2.1.1.33</ecNumber>
    </recommendedName>
    <alternativeName>
        <fullName evidence="2">tRNA (guanine(46)-N(7))-methyltransferase</fullName>
    </alternativeName>
    <alternativeName>
        <fullName evidence="2">tRNA(m7G46)-methyltransferase</fullName>
    </alternativeName>
</protein>
<dbReference type="EC" id="2.1.1.33" evidence="2"/>
<dbReference type="EMBL" id="AM743169">
    <property type="protein sequence ID" value="CAQ47185.1"/>
    <property type="molecule type" value="Genomic_DNA"/>
</dbReference>
<dbReference type="RefSeq" id="WP_005410814.1">
    <property type="nucleotide sequence ID" value="NC_010943.1"/>
</dbReference>
<dbReference type="SMR" id="B2FSD1"/>
<dbReference type="EnsemblBacteria" id="CAQ47185">
    <property type="protein sequence ID" value="CAQ47185"/>
    <property type="gene ID" value="Smlt3776"/>
</dbReference>
<dbReference type="GeneID" id="93705345"/>
<dbReference type="KEGG" id="sml:Smlt3776"/>
<dbReference type="eggNOG" id="COG0220">
    <property type="taxonomic scope" value="Bacteria"/>
</dbReference>
<dbReference type="HOGENOM" id="CLU_050910_0_1_6"/>
<dbReference type="UniPathway" id="UPA00989"/>
<dbReference type="Proteomes" id="UP000008840">
    <property type="component" value="Chromosome"/>
</dbReference>
<dbReference type="GO" id="GO:0043527">
    <property type="term" value="C:tRNA methyltransferase complex"/>
    <property type="evidence" value="ECO:0007669"/>
    <property type="project" value="TreeGrafter"/>
</dbReference>
<dbReference type="GO" id="GO:0008176">
    <property type="term" value="F:tRNA (guanine(46)-N7)-methyltransferase activity"/>
    <property type="evidence" value="ECO:0007669"/>
    <property type="project" value="UniProtKB-UniRule"/>
</dbReference>
<dbReference type="CDD" id="cd02440">
    <property type="entry name" value="AdoMet_MTases"/>
    <property type="match status" value="1"/>
</dbReference>
<dbReference type="FunFam" id="3.40.50.150:FF:000035">
    <property type="entry name" value="tRNA (guanine-N(7)-)-methyltransferase"/>
    <property type="match status" value="1"/>
</dbReference>
<dbReference type="Gene3D" id="3.40.50.150">
    <property type="entry name" value="Vaccinia Virus protein VP39"/>
    <property type="match status" value="1"/>
</dbReference>
<dbReference type="HAMAP" id="MF_01057">
    <property type="entry name" value="tRNA_methyltr_TrmB"/>
    <property type="match status" value="1"/>
</dbReference>
<dbReference type="InterPro" id="IPR029063">
    <property type="entry name" value="SAM-dependent_MTases_sf"/>
</dbReference>
<dbReference type="InterPro" id="IPR003358">
    <property type="entry name" value="tRNA_(Gua-N-7)_MeTrfase_Trmb"/>
</dbReference>
<dbReference type="InterPro" id="IPR055361">
    <property type="entry name" value="tRNA_methyltr_TrmB_bact"/>
</dbReference>
<dbReference type="NCBIfam" id="TIGR00091">
    <property type="entry name" value="tRNA (guanosine(46)-N7)-methyltransferase TrmB"/>
    <property type="match status" value="1"/>
</dbReference>
<dbReference type="PANTHER" id="PTHR23417">
    <property type="entry name" value="3-DEOXY-D-MANNO-OCTULOSONIC-ACID TRANSFERASE/TRNA GUANINE-N 7 - -METHYLTRANSFERASE"/>
    <property type="match status" value="1"/>
</dbReference>
<dbReference type="PANTHER" id="PTHR23417:SF14">
    <property type="entry name" value="PENTACOTRIPEPTIDE-REPEAT REGION OF PRORP DOMAIN-CONTAINING PROTEIN"/>
    <property type="match status" value="1"/>
</dbReference>
<dbReference type="Pfam" id="PF02390">
    <property type="entry name" value="Methyltransf_4"/>
    <property type="match status" value="1"/>
</dbReference>
<dbReference type="SUPFAM" id="SSF53335">
    <property type="entry name" value="S-adenosyl-L-methionine-dependent methyltransferases"/>
    <property type="match status" value="1"/>
</dbReference>
<dbReference type="PROSITE" id="PS51625">
    <property type="entry name" value="SAM_MT_TRMB"/>
    <property type="match status" value="1"/>
</dbReference>
<organism>
    <name type="scientific">Stenotrophomonas maltophilia (strain K279a)</name>
    <dbReference type="NCBI Taxonomy" id="522373"/>
    <lineage>
        <taxon>Bacteria</taxon>
        <taxon>Pseudomonadati</taxon>
        <taxon>Pseudomonadota</taxon>
        <taxon>Gammaproteobacteria</taxon>
        <taxon>Lysobacterales</taxon>
        <taxon>Lysobacteraceae</taxon>
        <taxon>Stenotrophomonas</taxon>
        <taxon>Stenotrophomonas maltophilia group</taxon>
    </lineage>
</organism>
<reference key="1">
    <citation type="journal article" date="2008" name="Genome Biol.">
        <title>The complete genome, comparative and functional analysis of Stenotrophomonas maltophilia reveals an organism heavily shielded by drug resistance determinants.</title>
        <authorList>
            <person name="Crossman L.C."/>
            <person name="Gould V.C."/>
            <person name="Dow J.M."/>
            <person name="Vernikos G.S."/>
            <person name="Okazaki A."/>
            <person name="Sebaihia M."/>
            <person name="Saunders D."/>
            <person name="Arrowsmith C."/>
            <person name="Carver T."/>
            <person name="Peters N."/>
            <person name="Adlem E."/>
            <person name="Kerhornou A."/>
            <person name="Lord A."/>
            <person name="Murphy L."/>
            <person name="Seeger K."/>
            <person name="Squares R."/>
            <person name="Rutter S."/>
            <person name="Quail M.A."/>
            <person name="Rajandream M.A."/>
            <person name="Harris D."/>
            <person name="Churcher C."/>
            <person name="Bentley S.D."/>
            <person name="Parkhill J."/>
            <person name="Thomson N.R."/>
            <person name="Avison M.B."/>
        </authorList>
    </citation>
    <scope>NUCLEOTIDE SEQUENCE [LARGE SCALE GENOMIC DNA]</scope>
    <source>
        <strain>K279a</strain>
    </source>
</reference>
<proteinExistence type="inferred from homology"/>
<gene>
    <name evidence="2" type="primary">trmB</name>
    <name type="ordered locus">Smlt3776</name>
</gene>